<comment type="function">
    <text evidence="1 2 11 13 14">Positive regulator of myogenesis. Acts as a cofactor for myogenic bHLH transcription factors such as MYOD1, and probably MYOG and MYF6. Enhances the DNA-binding activity of the MYOD1:TCF3 isoform E47 complex and may promote formation of a functional MYOD1:TCF3 isoform E47:MEF2A complex involved in myogenesis (By similarity). Plays a crucial and specific role in the organization of cytosolic structures in cardiomyocytes. Could play a role in mechanical stretch sensing. May be a scaffold protein that promotes the assembly of interacting proteins at Z-line structures. It is essential for calcineurin anchorage to the Z line. Required for stress-induced calcineurin-NFAT activation (By similarity). The role in regulation of cytoskeleton dynamics by association with CFL2 is reported conflictingly: Shown to enhance CFL2-mediated F-actin depolymerization dependent on the CSRP3:CFL2 molecular ratio, and also shown to reduce the ability of CLF1 and CFL2 to enhance actin depolymerization (PubMed:19752190, PubMed:24934443). Proposed to contribute to the maintenance of muscle cell integrity through an actin-based mechanism. Can directly bind to actin filaments, cross-link actin filaments into bundles without polarity selectivity and protect them from dilution- and cofilin-mediated depolymerization; the function seems to involve its self-association (PubMed:24934443). In vitro can inhibit PKC/PRKCA activity (PubMed:27353086). Proposed to be involved in cardiac stress signaling by down-regulating excessive PKC/PRKCA signaling (By similarity).</text>
</comment>
<comment type="function">
    <molecule>Isoform 2</molecule>
    <text evidence="12">May play a role in early sarcomere organization. Overexpression in myotubes negatively regulates myotube differentiation. By association with isoform 1 and thus changing the CSRP3 isoform 1:CFL2 stoichiometry is proposed to down-regulate CFL2-mediated F-actin depolymerization.</text>
</comment>
<comment type="subunit">
    <text evidence="1 2 5 7 8 11 12 13">Self-associates. Oligomeric in the cytoplasm and monomeric in the nucleus (By similarity). Homooligomers preferentially form along the actin cytoskeleton. Isoform 2 interacts with isoform 1 (PubMed:24860983, PubMed:24934443). Isoform 1 but not isoform 2 interacts with MYOD1 and MYOG. Isoform 1 interacts with TCAP, ACTN2 and NRAP. Isoform 2 interacts with TCAP and alpha-actinin (PubMed:12507422, PubMed:15205937, PubMed:15582318, PubMed:24860983). Interacts with LDHD. Interacts (via N-terminus)with GLRX3 (via C-terminus) and PPP3CA; GLRX3 and calcineurin compete for interaction with CSRP3. Interacts with MYF6 (By similarity). Interacts with CFL2; the stoichiometry influences F-actin depolymerization and possibly two molecules of CFL2 can interact with one molecule of CSRP3 resulting in the highest functional impact; the interaction is stronger with phosphorylated CFL2 (PubMed:19752190).</text>
</comment>
<comment type="interaction">
    <interactant intactId="EBI-5658719">
        <id>P50461</id>
    </interactant>
    <interactant intactId="EBI-77797">
        <id>P35609</id>
        <label>ACTN2</label>
    </interactant>
    <organismsDiffer>false</organismsDiffer>
    <experiments>4</experiments>
</comment>
<comment type="interaction">
    <interactant intactId="EBI-5658719">
        <id>P50461</id>
    </interactant>
    <interactant intactId="EBI-351218">
        <id>Q9Y281</id>
        <label>CFL2</label>
    </interactant>
    <organismsDiffer>false</organismsDiffer>
    <experiments>2</experiments>
</comment>
<comment type="interaction">
    <interactant intactId="EBI-5658719">
        <id>P50461</id>
    </interactant>
    <interactant intactId="EBI-5658719">
        <id>P50461</id>
        <label>CSRP3</label>
    </interactant>
    <organismsDiffer>false</organismsDiffer>
    <experiments>2</experiments>
</comment>
<comment type="interaction">
    <interactant intactId="EBI-5658719">
        <id>P50461</id>
    </interactant>
    <interactant intactId="EBI-466029">
        <id>P42858</id>
        <label>HTT</label>
    </interactant>
    <organismsDiffer>false</organismsDiffer>
    <experiments>3</experiments>
</comment>
<comment type="interaction">
    <interactant intactId="EBI-5658719">
        <id>P50461</id>
    </interactant>
    <interactant intactId="EBI-5660292">
        <id>Q86VF7</id>
        <label>NRAP</label>
    </interactant>
    <organismsDiffer>false</organismsDiffer>
    <experiments>2</experiments>
</comment>
<comment type="interaction">
    <interactant intactId="EBI-5658719">
        <id>P50461</id>
    </interactant>
    <interactant intactId="EBI-954089">
        <id>O15273</id>
        <label>TCAP</label>
    </interactant>
    <organismsDiffer>false</organismsDiffer>
    <experiments>3</experiments>
</comment>
<comment type="subcellular location">
    <subcellularLocation>
        <location evidence="2">Nucleus</location>
    </subcellularLocation>
    <subcellularLocation>
        <location evidence="9">Cytoplasm</location>
    </subcellularLocation>
    <subcellularLocation>
        <location evidence="15">Cytoplasm</location>
        <location evidence="15">Cytoskeleton</location>
    </subcellularLocation>
    <subcellularLocation>
        <location evidence="12">Cytoplasm</location>
        <location evidence="12">Myofibril</location>
        <location evidence="12">Sarcomere</location>
        <location evidence="12">Z line</location>
    </subcellularLocation>
    <subcellularLocation>
        <location evidence="13">Cytoplasm</location>
        <location evidence="13">Myofibril</location>
        <location evidence="13">Sarcomere</location>
    </subcellularLocation>
    <text evidence="1 2">Nucleocytoplasmic shuttling protein. Mainly cytoplasmic. In the Z line, found associated with GLRX3 (By similarity).</text>
</comment>
<comment type="subcellular location">
    <molecule>Isoform 2</molecule>
    <subcellularLocation>
        <location evidence="12">Cytoplasm</location>
        <location evidence="12">Myofibril</location>
        <location evidence="12">Sarcomere</location>
        <location evidence="12">Z line</location>
    </subcellularLocation>
</comment>
<comment type="alternative products">
    <event type="alternative splicing"/>
    <isoform>
        <id>P50461-1</id>
        <name>1</name>
        <name>MLP-a</name>
        <sequence type="displayed"/>
    </isoform>
    <isoform>
        <id>P50461-2</id>
        <name>2</name>
        <name>MLP-b</name>
        <sequence type="described" ref="VSP_058575 VSP_058576"/>
    </isoform>
</comment>
<comment type="tissue specificity">
    <text evidence="12">Cardiac and slow-twitch skeletal muscles. Isoform 2 is expressed in striated muscle. Isoform 2 is specifically expressed at higher levels in patients with neuromuscular diseases, such as limb-girdle muscular dystrophy 2A (LGMD2A), Duchenne muscular dystrophy (DMD) and dermatomyositis (PubMed:24860983).</text>
</comment>
<comment type="domain">
    <text evidence="2 13">LIM zinc-binding domain 1 is required for self-association. LIM zinc-binding domain 1 and LIM zinc-binding domain 2 both are required for optimal actin-bundling activity (PubMed:24934443). LIM zinc-binding domain 1 mediates binding to MYOD1. LIM zinc-binding domain 2 mediates binding to SPTB (By similarity).</text>
</comment>
<comment type="PTM">
    <text evidence="16">Phosphorylated by PKC/PRKCA.</text>
</comment>
<comment type="disease" evidence="5 9 10">
    <disease id="DI-00219">
        <name>Cardiomyopathy, dilated, 1M</name>
        <acronym>CMD1M</acronym>
        <description>A disorder characterized by ventricular dilation and impaired systolic function, resulting in congestive heart failure and arrhythmia. Patients are at risk of premature death.</description>
        <dbReference type="MIM" id="607482"/>
    </disease>
    <text>The disease is caused by variants affecting the gene represented in this entry.</text>
</comment>
<comment type="disease" evidence="6 7 9 14">
    <disease id="DI-00242">
        <name>Cardiomyopathy, familial hypertrophic, 12</name>
        <acronym>CMH12</acronym>
        <description>A hereditary heart disorder characterized by ventricular hypertrophy, which is usually asymmetric and often involves the interventricular septum. The symptoms include dyspnea, syncope, collapse, palpitations, and chest pain. They can be readily provoked by exercise. The disorder has inter- and intrafamilial variability ranging from benign to malignant forms with high risk of cardiac failure and sudden cardiac death.</description>
        <dbReference type="MIM" id="612124"/>
    </disease>
    <text>The disease is caused by variants affecting the gene represented in this entry.</text>
</comment>
<accession>P50461</accession>
<accession>Q9P131</accession>
<accession>S4S7M7</accession>
<dbReference type="EMBL" id="U20324">
    <property type="protein sequence ID" value="AAA91104.1"/>
    <property type="molecule type" value="mRNA"/>
</dbReference>
<dbReference type="EMBL" id="U49837">
    <property type="protein sequence ID" value="AAA92571.1"/>
    <property type="molecule type" value="mRNA"/>
</dbReference>
<dbReference type="EMBL" id="U72898">
    <property type="protein sequence ID" value="AAD00189.1"/>
    <property type="molecule type" value="Genomic_DNA"/>
</dbReference>
<dbReference type="EMBL" id="U72894">
    <property type="protein sequence ID" value="AAD00189.1"/>
    <property type="status" value="JOINED"/>
    <property type="molecule type" value="Genomic_DNA"/>
</dbReference>
<dbReference type="EMBL" id="U72895">
    <property type="protein sequence ID" value="AAD00189.1"/>
    <property type="status" value="JOINED"/>
    <property type="molecule type" value="Genomic_DNA"/>
</dbReference>
<dbReference type="EMBL" id="U72896">
    <property type="protein sequence ID" value="AAD00189.1"/>
    <property type="status" value="JOINED"/>
    <property type="molecule type" value="Genomic_DNA"/>
</dbReference>
<dbReference type="EMBL" id="U72897">
    <property type="protein sequence ID" value="AAD00189.1"/>
    <property type="status" value="JOINED"/>
    <property type="molecule type" value="Genomic_DNA"/>
</dbReference>
<dbReference type="EMBL" id="U72899">
    <property type="protein sequence ID" value="AAD00183.1"/>
    <property type="molecule type" value="mRNA"/>
</dbReference>
<dbReference type="EMBL" id="AF121260">
    <property type="protein sequence ID" value="AAF28868.1"/>
    <property type="molecule type" value="mRNA"/>
</dbReference>
<dbReference type="EMBL" id="JN898958">
    <property type="protein sequence ID" value="AFH66949.1"/>
    <property type="molecule type" value="mRNA"/>
</dbReference>
<dbReference type="EMBL" id="BC005900">
    <property type="protein sequence ID" value="AAH05900.1"/>
    <property type="molecule type" value="mRNA"/>
</dbReference>
<dbReference type="EMBL" id="BC024010">
    <property type="protein sequence ID" value="AAH24010.1"/>
    <property type="molecule type" value="mRNA"/>
</dbReference>
<dbReference type="EMBL" id="BC057221">
    <property type="protein sequence ID" value="AAH57221.1"/>
    <property type="molecule type" value="mRNA"/>
</dbReference>
<dbReference type="CCDS" id="CCDS7848.1">
    <molecule id="P50461-1"/>
</dbReference>
<dbReference type="RefSeq" id="NP_003467.1">
    <molecule id="P50461-1"/>
    <property type="nucleotide sequence ID" value="NM_003476.5"/>
</dbReference>
<dbReference type="PDB" id="2O10">
    <property type="method" value="NMR"/>
    <property type="chains" value="A=7-66"/>
</dbReference>
<dbReference type="PDB" id="2O13">
    <property type="method" value="NMR"/>
    <property type="chains" value="A=119-176"/>
</dbReference>
<dbReference type="PDBsum" id="2O10"/>
<dbReference type="PDBsum" id="2O13"/>
<dbReference type="BMRB" id="P50461"/>
<dbReference type="SMR" id="P50461"/>
<dbReference type="BioGRID" id="113736">
    <property type="interactions" value="15"/>
</dbReference>
<dbReference type="FunCoup" id="P50461">
    <property type="interactions" value="43"/>
</dbReference>
<dbReference type="IntAct" id="P50461">
    <property type="interactions" value="15"/>
</dbReference>
<dbReference type="MINT" id="P50461"/>
<dbReference type="STRING" id="9606.ENSP00000431813"/>
<dbReference type="iPTMnet" id="P50461"/>
<dbReference type="PhosphoSitePlus" id="P50461"/>
<dbReference type="SwissPalm" id="P50461"/>
<dbReference type="BioMuta" id="CSRP3"/>
<dbReference type="DMDM" id="1705933"/>
<dbReference type="jPOST" id="P50461"/>
<dbReference type="MassIVE" id="P50461"/>
<dbReference type="PaxDb" id="9606-ENSP00000431813"/>
<dbReference type="PeptideAtlas" id="P50461"/>
<dbReference type="ProteomicsDB" id="56231"/>
<dbReference type="Pumba" id="P50461"/>
<dbReference type="Antibodypedia" id="12424">
    <property type="antibodies" value="309 antibodies from 34 providers"/>
</dbReference>
<dbReference type="DNASU" id="8048"/>
<dbReference type="Ensembl" id="ENST00000265968.9">
    <molecule id="P50461-1"/>
    <property type="protein sequence ID" value="ENSP00000265968.3"/>
    <property type="gene ID" value="ENSG00000129170.10"/>
</dbReference>
<dbReference type="Ensembl" id="ENST00000533783.2">
    <molecule id="P50461-1"/>
    <property type="protein sequence ID" value="ENSP00000431813.1"/>
    <property type="gene ID" value="ENSG00000129170.10"/>
</dbReference>
<dbReference type="Ensembl" id="ENST00000649235.1">
    <molecule id="P50461-1"/>
    <property type="protein sequence ID" value="ENSP00000497388.1"/>
    <property type="gene ID" value="ENSG00000129170.10"/>
</dbReference>
<dbReference type="GeneID" id="8048"/>
<dbReference type="KEGG" id="hsa:8048"/>
<dbReference type="MANE-Select" id="ENST00000265968.9">
    <property type="protein sequence ID" value="ENSP00000265968.3"/>
    <property type="RefSeq nucleotide sequence ID" value="NM_003476.5"/>
    <property type="RefSeq protein sequence ID" value="NP_003467.1"/>
</dbReference>
<dbReference type="UCSC" id="uc001mpk.4">
    <molecule id="P50461-1"/>
    <property type="organism name" value="human"/>
</dbReference>
<dbReference type="AGR" id="HGNC:2472"/>
<dbReference type="CTD" id="8048"/>
<dbReference type="DisGeNET" id="8048"/>
<dbReference type="GeneCards" id="CSRP3"/>
<dbReference type="GeneReviews" id="CSRP3"/>
<dbReference type="HGNC" id="HGNC:2472">
    <property type="gene designation" value="CSRP3"/>
</dbReference>
<dbReference type="HPA" id="ENSG00000129170">
    <property type="expression patterns" value="Tissue enhanced (heart muscle, skeletal muscle, tongue)"/>
</dbReference>
<dbReference type="MalaCards" id="CSRP3"/>
<dbReference type="MIM" id="600824">
    <property type="type" value="gene"/>
</dbReference>
<dbReference type="MIM" id="607482">
    <property type="type" value="phenotype"/>
</dbReference>
<dbReference type="MIM" id="612124">
    <property type="type" value="phenotype"/>
</dbReference>
<dbReference type="neXtProt" id="NX_P50461"/>
<dbReference type="OpenTargets" id="ENSG00000129170"/>
<dbReference type="Orphanet" id="154">
    <property type="disease" value="Familial isolated dilated cardiomyopathy"/>
</dbReference>
<dbReference type="PharmGKB" id="PA26971"/>
<dbReference type="VEuPathDB" id="HostDB:ENSG00000129170"/>
<dbReference type="eggNOG" id="KOG1700">
    <property type="taxonomic scope" value="Eukaryota"/>
</dbReference>
<dbReference type="GeneTree" id="ENSGT00940000159533"/>
<dbReference type="HOGENOM" id="CLU_054591_1_1_1"/>
<dbReference type="InParanoid" id="P50461"/>
<dbReference type="OMA" id="TCYGRRY"/>
<dbReference type="OrthoDB" id="8062037at2759"/>
<dbReference type="PAN-GO" id="P50461">
    <property type="GO annotations" value="8 GO annotations based on evolutionary models"/>
</dbReference>
<dbReference type="PhylomeDB" id="P50461"/>
<dbReference type="TreeFam" id="TF313758"/>
<dbReference type="PathwayCommons" id="P50461"/>
<dbReference type="SignaLink" id="P50461"/>
<dbReference type="SIGNOR" id="P50461"/>
<dbReference type="BioGRID-ORCS" id="8048">
    <property type="hits" value="18 hits in 1150 CRISPR screens"/>
</dbReference>
<dbReference type="ChiTaRS" id="CSRP3">
    <property type="organism name" value="human"/>
</dbReference>
<dbReference type="EvolutionaryTrace" id="P50461"/>
<dbReference type="GeneWiki" id="CSRP3"/>
<dbReference type="GenomeRNAi" id="8048"/>
<dbReference type="Pharos" id="P50461">
    <property type="development level" value="Tbio"/>
</dbReference>
<dbReference type="PRO" id="PR:P50461"/>
<dbReference type="Proteomes" id="UP000005640">
    <property type="component" value="Chromosome 11"/>
</dbReference>
<dbReference type="RNAct" id="P50461">
    <property type="molecule type" value="protein"/>
</dbReference>
<dbReference type="Bgee" id="ENSG00000129170">
    <property type="expression patterns" value="Expressed in skeletal muscle tissue of rectus abdominis and 110 other cell types or tissues"/>
</dbReference>
<dbReference type="ExpressionAtlas" id="P50461">
    <property type="expression patterns" value="baseline and differential"/>
</dbReference>
<dbReference type="GO" id="GO:0005737">
    <property type="term" value="C:cytoplasm"/>
    <property type="evidence" value="ECO:0000318"/>
    <property type="project" value="GO_Central"/>
</dbReference>
<dbReference type="GO" id="GO:0005856">
    <property type="term" value="C:cytoskeleton"/>
    <property type="evidence" value="ECO:0007669"/>
    <property type="project" value="UniProtKB-SubCell"/>
</dbReference>
<dbReference type="GO" id="GO:0005829">
    <property type="term" value="C:cytosol"/>
    <property type="evidence" value="ECO:0000314"/>
    <property type="project" value="HPA"/>
</dbReference>
<dbReference type="GO" id="GO:0005654">
    <property type="term" value="C:nucleoplasm"/>
    <property type="evidence" value="ECO:0000314"/>
    <property type="project" value="HPA"/>
</dbReference>
<dbReference type="GO" id="GO:0005634">
    <property type="term" value="C:nucleus"/>
    <property type="evidence" value="ECO:0000318"/>
    <property type="project" value="GO_Central"/>
</dbReference>
<dbReference type="GO" id="GO:0030018">
    <property type="term" value="C:Z disc"/>
    <property type="evidence" value="ECO:0000314"/>
    <property type="project" value="BHF-UCL"/>
</dbReference>
<dbReference type="GO" id="GO:0003779">
    <property type="term" value="F:actin binding"/>
    <property type="evidence" value="ECO:0007669"/>
    <property type="project" value="UniProtKB-KW"/>
</dbReference>
<dbReference type="GO" id="GO:0042805">
    <property type="term" value="F:actinin binding"/>
    <property type="evidence" value="ECO:0000250"/>
    <property type="project" value="BHF-UCL"/>
</dbReference>
<dbReference type="GO" id="GO:0042802">
    <property type="term" value="F:identical protein binding"/>
    <property type="evidence" value="ECO:0000353"/>
    <property type="project" value="IntAct"/>
</dbReference>
<dbReference type="GO" id="GO:0046872">
    <property type="term" value="F:metal ion binding"/>
    <property type="evidence" value="ECO:0007669"/>
    <property type="project" value="UniProtKB-KW"/>
</dbReference>
<dbReference type="GO" id="GO:0008307">
    <property type="term" value="F:structural constituent of muscle"/>
    <property type="evidence" value="ECO:0000315"/>
    <property type="project" value="BHF-UCL"/>
</dbReference>
<dbReference type="GO" id="GO:0031433">
    <property type="term" value="F:telethonin binding"/>
    <property type="evidence" value="ECO:0000314"/>
    <property type="project" value="BHF-UCL"/>
</dbReference>
<dbReference type="GO" id="GO:0060048">
    <property type="term" value="P:cardiac muscle contraction"/>
    <property type="evidence" value="ECO:0000315"/>
    <property type="project" value="BHF-UCL"/>
</dbReference>
<dbReference type="GO" id="GO:0003300">
    <property type="term" value="P:cardiac muscle hypertrophy"/>
    <property type="evidence" value="ECO:0000315"/>
    <property type="project" value="BHF-UCL"/>
</dbReference>
<dbReference type="GO" id="GO:0048738">
    <property type="term" value="P:cardiac muscle tissue development"/>
    <property type="evidence" value="ECO:0000250"/>
    <property type="project" value="BHF-UCL"/>
</dbReference>
<dbReference type="GO" id="GO:0055003">
    <property type="term" value="P:cardiac myofibril assembly"/>
    <property type="evidence" value="ECO:0000250"/>
    <property type="project" value="BHF-UCL"/>
</dbReference>
<dbReference type="GO" id="GO:0035995">
    <property type="term" value="P:detection of muscle stretch"/>
    <property type="evidence" value="ECO:0000315"/>
    <property type="project" value="BHF-UCL"/>
</dbReference>
<dbReference type="GO" id="GO:0042593">
    <property type="term" value="P:glucose homeostasis"/>
    <property type="evidence" value="ECO:0007669"/>
    <property type="project" value="Ensembl"/>
</dbReference>
<dbReference type="GO" id="GO:0006954">
    <property type="term" value="P:inflammatory response"/>
    <property type="evidence" value="ECO:0007669"/>
    <property type="project" value="Ensembl"/>
</dbReference>
<dbReference type="GO" id="GO:0008286">
    <property type="term" value="P:insulin receptor signaling pathway"/>
    <property type="evidence" value="ECO:0007669"/>
    <property type="project" value="Ensembl"/>
</dbReference>
<dbReference type="GO" id="GO:0006874">
    <property type="term" value="P:intracellular calcium ion homeostasis"/>
    <property type="evidence" value="ECO:0000250"/>
    <property type="project" value="BHF-UCL"/>
</dbReference>
<dbReference type="GO" id="GO:0046716">
    <property type="term" value="P:muscle cell cellular homeostasis"/>
    <property type="evidence" value="ECO:0007669"/>
    <property type="project" value="Ensembl"/>
</dbReference>
<dbReference type="GO" id="GO:0060537">
    <property type="term" value="P:muscle tissue development"/>
    <property type="evidence" value="ECO:0000318"/>
    <property type="project" value="GO_Central"/>
</dbReference>
<dbReference type="GO" id="GO:1903919">
    <property type="term" value="P:negative regulation of actin filament severing"/>
    <property type="evidence" value="ECO:0000314"/>
    <property type="project" value="MGI"/>
</dbReference>
<dbReference type="GO" id="GO:0045662">
    <property type="term" value="P:negative regulation of myoblast differentiation"/>
    <property type="evidence" value="ECO:0000314"/>
    <property type="project" value="MGI"/>
</dbReference>
<dbReference type="GO" id="GO:0141212">
    <property type="term" value="P:phospholipase C/protein kinase C signal transduction"/>
    <property type="evidence" value="ECO:0007669"/>
    <property type="project" value="Ensembl"/>
</dbReference>
<dbReference type="GO" id="GO:1903920">
    <property type="term" value="P:positive regulation of actin filament severing"/>
    <property type="evidence" value="ECO:0000314"/>
    <property type="project" value="MGI"/>
</dbReference>
<dbReference type="GO" id="GO:0045663">
    <property type="term" value="P:positive regulation of myoblast differentiation"/>
    <property type="evidence" value="ECO:0000314"/>
    <property type="project" value="MGI"/>
</dbReference>
<dbReference type="GO" id="GO:0045944">
    <property type="term" value="P:positive regulation of transcription by RNA polymerase II"/>
    <property type="evidence" value="ECO:0000316"/>
    <property type="project" value="MGI"/>
</dbReference>
<dbReference type="GO" id="GO:0033365">
    <property type="term" value="P:protein localization to organelle"/>
    <property type="evidence" value="ECO:0000315"/>
    <property type="project" value="BHF-UCL"/>
</dbReference>
<dbReference type="GO" id="GO:1903076">
    <property type="term" value="P:regulation of protein localization to plasma membrane"/>
    <property type="evidence" value="ECO:0007669"/>
    <property type="project" value="Ensembl"/>
</dbReference>
<dbReference type="GO" id="GO:0002026">
    <property type="term" value="P:regulation of the force of heart contraction"/>
    <property type="evidence" value="ECO:0000250"/>
    <property type="project" value="BHF-UCL"/>
</dbReference>
<dbReference type="GO" id="GO:0045214">
    <property type="term" value="P:sarcomere organization"/>
    <property type="evidence" value="ECO:0000318"/>
    <property type="project" value="GO_Central"/>
</dbReference>
<dbReference type="GO" id="GO:0007519">
    <property type="term" value="P:skeletal muscle tissue development"/>
    <property type="evidence" value="ECO:0000304"/>
    <property type="project" value="ProtInc"/>
</dbReference>
<dbReference type="GO" id="GO:0033292">
    <property type="term" value="P:T-tubule organization"/>
    <property type="evidence" value="ECO:0007669"/>
    <property type="project" value="Ensembl"/>
</dbReference>
<dbReference type="CDD" id="cd09481">
    <property type="entry name" value="LIM1_CRP3"/>
    <property type="match status" value="1"/>
</dbReference>
<dbReference type="CDD" id="cd09482">
    <property type="entry name" value="LIM2_CRP3"/>
    <property type="match status" value="1"/>
</dbReference>
<dbReference type="FunFam" id="2.10.110.10:FF:000001">
    <property type="entry name" value="Cysteine and glycine-rich protein 1"/>
    <property type="match status" value="2"/>
</dbReference>
<dbReference type="Gene3D" id="2.10.110.10">
    <property type="entry name" value="Cysteine Rich Protein"/>
    <property type="match status" value="2"/>
</dbReference>
<dbReference type="InterPro" id="IPR001781">
    <property type="entry name" value="Znf_LIM"/>
</dbReference>
<dbReference type="PANTHER" id="PTHR24215:SF1">
    <property type="entry name" value="CYSTEINE AND GLYCINE-RICH PROTEIN 3"/>
    <property type="match status" value="1"/>
</dbReference>
<dbReference type="PANTHER" id="PTHR24215">
    <property type="entry name" value="RHO-GTPASE-ACTIVATING PROTEIN LRG1"/>
    <property type="match status" value="1"/>
</dbReference>
<dbReference type="Pfam" id="PF00412">
    <property type="entry name" value="LIM"/>
    <property type="match status" value="2"/>
</dbReference>
<dbReference type="SMART" id="SM00132">
    <property type="entry name" value="LIM"/>
    <property type="match status" value="2"/>
</dbReference>
<dbReference type="SUPFAM" id="SSF57716">
    <property type="entry name" value="Glucocorticoid receptor-like (DNA-binding domain)"/>
    <property type="match status" value="4"/>
</dbReference>
<dbReference type="PROSITE" id="PS00478">
    <property type="entry name" value="LIM_DOMAIN_1"/>
    <property type="match status" value="2"/>
</dbReference>
<dbReference type="PROSITE" id="PS50023">
    <property type="entry name" value="LIM_DOMAIN_2"/>
    <property type="match status" value="2"/>
</dbReference>
<organism>
    <name type="scientific">Homo sapiens</name>
    <name type="common">Human</name>
    <dbReference type="NCBI Taxonomy" id="9606"/>
    <lineage>
        <taxon>Eukaryota</taxon>
        <taxon>Metazoa</taxon>
        <taxon>Chordata</taxon>
        <taxon>Craniata</taxon>
        <taxon>Vertebrata</taxon>
        <taxon>Euteleostomi</taxon>
        <taxon>Mammalia</taxon>
        <taxon>Eutheria</taxon>
        <taxon>Euarchontoglires</taxon>
        <taxon>Primates</taxon>
        <taxon>Haplorrhini</taxon>
        <taxon>Catarrhini</taxon>
        <taxon>Hominidae</taxon>
        <taxon>Homo</taxon>
    </lineage>
</organism>
<protein>
    <recommendedName>
        <fullName>Cysteine and glycine-rich protein 3</fullName>
    </recommendedName>
    <alternativeName>
        <fullName>Cardiac LIM protein</fullName>
    </alternativeName>
    <alternativeName>
        <fullName>Cysteine-rich protein 3</fullName>
        <shortName>CRP3</shortName>
    </alternativeName>
    <alternativeName>
        <fullName>LIM domain protein, cardiac</fullName>
    </alternativeName>
    <alternativeName>
        <fullName>Muscle LIM protein</fullName>
    </alternativeName>
</protein>
<gene>
    <name type="primary">CSRP3</name>
    <name type="synonym">CLP</name>
    <name type="synonym">MLP</name>
</gene>
<sequence>MPNWGGGAKCGACEKTVYHAEEIQCNGRSFHKTCFHCMACRKALDSTTVAAHESEIYCKVCYGRRYGPKGIGYGQGAGCLSTDTGEHLGLQFQQSPKPARSVTTSNPSKFTAKFGESEKCPRCGKSVYAAEKVMGGGKPWHKTCFRCAICGKSLESTNVTDKDGELYCKVCYAKNFGPTGIGFGGLTQQVEKKE</sequence>
<evidence type="ECO:0000250" key="1">
    <source>
        <dbReference type="UniProtKB" id="P50462"/>
    </source>
</evidence>
<evidence type="ECO:0000250" key="2">
    <source>
        <dbReference type="UniProtKB" id="P50463"/>
    </source>
</evidence>
<evidence type="ECO:0000255" key="3"/>
<evidence type="ECO:0000255" key="4">
    <source>
        <dbReference type="PROSITE-ProRule" id="PRU00125"/>
    </source>
</evidence>
<evidence type="ECO:0000269" key="5">
    <source>
    </source>
</evidence>
<evidence type="ECO:0000269" key="6">
    <source>
    </source>
</evidence>
<evidence type="ECO:0000269" key="7">
    <source>
    </source>
</evidence>
<evidence type="ECO:0000269" key="8">
    <source>
    </source>
</evidence>
<evidence type="ECO:0000269" key="9">
    <source>
    </source>
</evidence>
<evidence type="ECO:0000269" key="10">
    <source>
    </source>
</evidence>
<evidence type="ECO:0000269" key="11">
    <source>
    </source>
</evidence>
<evidence type="ECO:0000269" key="12">
    <source>
    </source>
</evidence>
<evidence type="ECO:0000269" key="13">
    <source>
    </source>
</evidence>
<evidence type="ECO:0000269" key="14">
    <source>
    </source>
</evidence>
<evidence type="ECO:0000305" key="15"/>
<evidence type="ECO:0000305" key="16">
    <source>
    </source>
</evidence>
<evidence type="ECO:0007829" key="17">
    <source>
        <dbReference type="PDB" id="2O10"/>
    </source>
</evidence>
<evidence type="ECO:0007829" key="18">
    <source>
        <dbReference type="PDB" id="2O13"/>
    </source>
</evidence>
<keyword id="KW-0002">3D-structure</keyword>
<keyword id="KW-0009">Actin-binding</keyword>
<keyword id="KW-0025">Alternative splicing</keyword>
<keyword id="KW-0122">Cardiomyopathy</keyword>
<keyword id="KW-0963">Cytoplasm</keyword>
<keyword id="KW-0206">Cytoskeleton</keyword>
<keyword id="KW-0217">Developmental protein</keyword>
<keyword id="KW-0221">Differentiation</keyword>
<keyword id="KW-0225">Disease variant</keyword>
<keyword id="KW-0440">LIM domain</keyword>
<keyword id="KW-0479">Metal-binding</keyword>
<keyword id="KW-0517">Myogenesis</keyword>
<keyword id="KW-0539">Nucleus</keyword>
<keyword id="KW-0597">Phosphoprotein</keyword>
<keyword id="KW-1267">Proteomics identification</keyword>
<keyword id="KW-1185">Reference proteome</keyword>
<keyword id="KW-0677">Repeat</keyword>
<keyword id="KW-0804">Transcription</keyword>
<keyword id="KW-0805">Transcription regulation</keyword>
<keyword id="KW-0862">Zinc</keyword>
<feature type="chain" id="PRO_0000075727" description="Cysteine and glycine-rich protein 3">
    <location>
        <begin position="1"/>
        <end position="194"/>
    </location>
</feature>
<feature type="domain" description="LIM zinc-binding 1" evidence="4">
    <location>
        <begin position="10"/>
        <end position="61"/>
    </location>
</feature>
<feature type="domain" description="LIM zinc-binding 2" evidence="4">
    <location>
        <begin position="120"/>
        <end position="171"/>
    </location>
</feature>
<feature type="region of interest" description="Interaction with TCAP" evidence="5">
    <location>
        <begin position="1"/>
        <end position="5"/>
    </location>
</feature>
<feature type="region of interest" description="Interaction with CLF2 and isoform 2" evidence="11 12">
    <location>
        <begin position="94"/>
        <end position="105"/>
    </location>
</feature>
<feature type="short sequence motif" description="Nuclear localization signal" evidence="2 3">
    <location>
        <begin position="64"/>
        <end position="69"/>
    </location>
</feature>
<feature type="modified residue" description="Phosphoserine" evidence="1">
    <location>
        <position position="95"/>
    </location>
</feature>
<feature type="modified residue" description="Phosphoserine" evidence="2">
    <location>
        <position position="153"/>
    </location>
</feature>
<feature type="splice variant" id="VSP_058575" description="In isoform 2.">
    <original>MACRKALDSTTVAAHESEIYCK</original>
    <variation>TLAQDLFPLCHLWEESGVHKC</variation>
    <location>
        <begin position="38"/>
        <end position="59"/>
    </location>
</feature>
<feature type="splice variant" id="VSP_058576" description="In isoform 2.">
    <location>
        <begin position="60"/>
        <end position="194"/>
    </location>
</feature>
<feature type="sequence variant" id="VAR_015401" description="In CMD1M; uncertain significance; decreases interaction with TCAP; dbSNP:rs45550635." evidence="5 9">
    <original>W</original>
    <variation>R</variation>
    <location>
        <position position="4"/>
    </location>
</feature>
<feature type="sequence variant" id="VAR_045932" description="In CMH12; decreases PKC/PRKCA activity; dbSNP:rs104894205." evidence="6 14">
    <original>L</original>
    <variation>P</variation>
    <location>
        <position position="44"/>
    </location>
</feature>
<feature type="sequence variant" id="VAR_045933" description="In CMH12; decreases PKC/PRKCA activity; dbSNP:rs281865416." evidence="6 14">
    <original>SE</original>
    <variation>RG</variation>
    <location>
        <begin position="54"/>
        <end position="55"/>
    </location>
</feature>
<feature type="sequence variant" id="VAR_045934" description="In CMH12; decreases interaction with NRAP and ACTN2, decreases zinc-binding and impairs protein stability, decreases PKC/PRKCA activity; dbSNP:rs104894204." evidence="6 7 9">
    <original>C</original>
    <variation>G</variation>
    <location>
        <position position="58"/>
    </location>
</feature>
<feature type="sequence variant" id="VAR_076805" description="In CMD1M; uncertain significance; increases PKC/PRKCA activity; dbSNP:rs45552933." evidence="10 14">
    <original>G</original>
    <variation>R</variation>
    <location>
        <position position="72"/>
    </location>
</feature>
<feature type="mutagenesis site" description="Increases PKC/PRKCA activity." evidence="14">
    <original>K</original>
    <variation>R</variation>
    <location>
        <position position="69"/>
    </location>
</feature>
<feature type="sequence conflict" description="In Ref. 4; AAF28868." evidence="15" ref="4">
    <original>N</original>
    <variation>H</variation>
    <location>
        <position position="26"/>
    </location>
</feature>
<feature type="strand" evidence="17">
    <location>
        <begin position="14"/>
        <end position="17"/>
    </location>
</feature>
<feature type="helix" evidence="17">
    <location>
        <begin position="19"/>
        <end position="21"/>
    </location>
</feature>
<feature type="strand" evidence="17">
    <location>
        <begin position="22"/>
        <end position="25"/>
    </location>
</feature>
<feature type="strand" evidence="17">
    <location>
        <begin position="28"/>
        <end position="31"/>
    </location>
</feature>
<feature type="turn" evidence="17">
    <location>
        <begin position="32"/>
        <end position="34"/>
    </location>
</feature>
<feature type="strand" evidence="17">
    <location>
        <begin position="38"/>
        <end position="40"/>
    </location>
</feature>
<feature type="turn" evidence="17">
    <location>
        <begin position="46"/>
        <end position="48"/>
    </location>
</feature>
<feature type="strand" evidence="17">
    <location>
        <begin position="50"/>
        <end position="52"/>
    </location>
</feature>
<feature type="strand" evidence="17">
    <location>
        <begin position="55"/>
        <end position="57"/>
    </location>
</feature>
<feature type="helix" evidence="17">
    <location>
        <begin position="59"/>
        <end position="65"/>
    </location>
</feature>
<feature type="turn" evidence="18">
    <location>
        <begin position="121"/>
        <end position="124"/>
    </location>
</feature>
<feature type="turn" evidence="18">
    <location>
        <begin position="129"/>
        <end position="131"/>
    </location>
</feature>
<feature type="strand" evidence="18">
    <location>
        <begin position="133"/>
        <end position="135"/>
    </location>
</feature>
<feature type="strand" evidence="18">
    <location>
        <begin position="138"/>
        <end position="140"/>
    </location>
</feature>
<feature type="turn" evidence="18">
    <location>
        <begin position="142"/>
        <end position="144"/>
    </location>
</feature>
<feature type="strand" evidence="18">
    <location>
        <begin position="145"/>
        <end position="147"/>
    </location>
</feature>
<feature type="turn" evidence="18">
    <location>
        <begin position="148"/>
        <end position="151"/>
    </location>
</feature>
<feature type="strand" evidence="18">
    <location>
        <begin position="159"/>
        <end position="162"/>
    </location>
</feature>
<feature type="strand" evidence="18">
    <location>
        <begin position="165"/>
        <end position="168"/>
    </location>
</feature>
<feature type="helix" evidence="18">
    <location>
        <begin position="169"/>
        <end position="175"/>
    </location>
</feature>
<name>CSRP3_HUMAN</name>
<proteinExistence type="evidence at protein level"/>
<reference key="1">
    <citation type="journal article" date="1995" name="Genomics">
        <title>Mapping of a human LIM protein (CLP) to human chromosome 11p15.1 by fluorescence in situ hybridization.</title>
        <authorList>
            <person name="Fung Y.W."/>
            <person name="Wang R.X."/>
            <person name="Heng H.H.Q."/>
            <person name="Liew C.C."/>
        </authorList>
    </citation>
    <scope>NUCLEOTIDE SEQUENCE [MRNA] (ISOFORM 1)</scope>
    <source>
        <tissue>Heart</tissue>
    </source>
</reference>
<reference key="2">
    <citation type="submission" date="1996-03" db="EMBL/GenBank/DDBJ databases">
        <title>Cloning of the gene encoding the human muscle LIM protein, a regulator of myogenesis.</title>
        <authorList>
            <person name="Medvedev A."/>
            <person name="Jetten A.M."/>
        </authorList>
    </citation>
    <scope>NUCLEOTIDE SEQUENCE [MRNA] (ISOFORM 1)</scope>
    <source>
        <tissue>Muscle</tissue>
    </source>
</reference>
<reference key="3">
    <citation type="submission" date="1996-10" db="EMBL/GenBank/DDBJ databases">
        <title>Cloning and characterization of the human muscle LIM protein gene.</title>
        <authorList>
            <person name="Yasunaga S."/>
            <person name="Harada H."/>
            <person name="Kimura A."/>
        </authorList>
    </citation>
    <scope>NUCLEOTIDE SEQUENCE [GENOMIC DNA / MRNA]</scope>
</reference>
<reference key="4">
    <citation type="submission" date="1999-01" db="EMBL/GenBank/DDBJ databases">
        <title>A novel member of LIM gene family involved in cardiovascular diseases.</title>
        <authorList>
            <person name="Chen K.H."/>
            <person name="Zhang J.F."/>
            <person name="Ma D.L."/>
            <person name="Tang J."/>
        </authorList>
    </citation>
    <scope>NUCLEOTIDE SEQUENCE [MRNA] (ISOFORM 1)</scope>
    <source>
        <tissue>Heart</tissue>
        <tissue>Skeletal muscle</tissue>
    </source>
</reference>
<reference key="5">
    <citation type="journal article" date="2014" name="FEBS J.">
        <title>Muscle lim protein isoform negatively regulates striated muscle actin dynamics and differentiation.</title>
        <authorList>
            <person name="Vafiadaki E."/>
            <person name="Arvanitis D.A."/>
            <person name="Papalouka V."/>
            <person name="Terzis G."/>
            <person name="Roumeliotis T.I."/>
            <person name="Spengos K."/>
            <person name="Garbis S.D."/>
            <person name="Manta P."/>
            <person name="Kranias E.G."/>
            <person name="Sanoudou D."/>
        </authorList>
    </citation>
    <scope>NUCLEOTIDE SEQUENCE [MRNA] (ISOFORM 2)</scope>
    <scope>FUNCTION (ISOFORM 2)</scope>
    <scope>SUBCELLULAR LOCATION (ISOFORM 2)</scope>
    <scope>TISSUE SPECIFICITY</scope>
    <scope>INTERACTION WITH MYOD1; MYOG; TCAP AND ALPHA-ACTININ</scope>
    <scope>SELF-ASSOCIATION</scope>
</reference>
<reference key="6">
    <citation type="journal article" date="2004" name="Genome Res.">
        <title>The status, quality, and expansion of the NIH full-length cDNA project: the Mammalian Gene Collection (MGC).</title>
        <authorList>
            <consortium name="The MGC Project Team"/>
        </authorList>
    </citation>
    <scope>NUCLEOTIDE SEQUENCE [LARGE SCALE MRNA] (ISOFORM 1)</scope>
    <source>
        <tissue>Skeletal muscle</tissue>
        <tissue>Testis</tissue>
    </source>
</reference>
<reference key="7">
    <citation type="journal article" date="2004" name="J. Am. Coll. Cardiol.">
        <title>Tcap gene mutations in hypertrophic cardiomyopathy and dilated cardiomyopathy.</title>
        <authorList>
            <person name="Hayashi T."/>
            <person name="Arimura T."/>
            <person name="Itoh-Satoh M."/>
            <person name="Ueda K."/>
            <person name="Hohda S."/>
            <person name="Inagaki N."/>
            <person name="Takahashi M."/>
            <person name="Hori H."/>
            <person name="Yasunami M."/>
            <person name="Nishi H."/>
            <person name="Koga Y."/>
            <person name="Nakamura H."/>
            <person name="Matsuzaki M."/>
            <person name="Choi B.Y."/>
            <person name="Bae S.W."/>
            <person name="You C.W."/>
            <person name="Han K.H."/>
            <person name="Park J.E."/>
            <person name="Knoell R."/>
            <person name="Hoshijima M."/>
            <person name="Chien K.R."/>
            <person name="Kimura A."/>
        </authorList>
    </citation>
    <scope>INTERACTION WITH TCAP</scope>
</reference>
<reference key="8">
    <citation type="journal article" date="2004" name="Cell Tissue Res.">
        <title>Decreased interactions of mutant muscle LIM protein (MLP) with N-RAP and alpha-actinin and their implication for hypertrophic cardiomyopathy.</title>
        <authorList>
            <person name="Gehmlich K."/>
            <person name="Geier C."/>
            <person name="Osterziel K.J."/>
            <person name="Van der Ven P.F."/>
            <person name="Fuerst D.O."/>
        </authorList>
    </citation>
    <scope>INTERACTION WITH NRAP AND ACTN2</scope>
    <scope>CHARACTERIZATION OF VARIANT CMH12 GLY-58</scope>
</reference>
<reference key="9">
    <citation type="journal article" date="2009" name="Mol. Cell. Biol.">
        <title>Muscle LIM protein interacts with cofilin 2 and regulates F-actin dynamics in cardiac and skeletal muscle.</title>
        <authorList>
            <person name="Papalouka V."/>
            <person name="Arvanitis D.A."/>
            <person name="Vafiadaki E."/>
            <person name="Mavroidis M."/>
            <person name="Papadodima S.A."/>
            <person name="Spiliopoulou C.A."/>
            <person name="Kremastinos D.T."/>
            <person name="Kranias E.G."/>
            <person name="Sanoudou D."/>
        </authorList>
    </citation>
    <scope>FUNCTION</scope>
    <scope>INTERACTION WITH CFL2</scope>
</reference>
<reference key="10">
    <citation type="journal article" date="2014" name="Mol. Cell. Biol.">
        <title>Human muscle LIM protein dimerizes along the actin cytoskeleton and cross-links actin filaments.</title>
        <authorList>
            <person name="Hoffmann C."/>
            <person name="Moreau F."/>
            <person name="Moes M."/>
            <person name="Luthold C."/>
            <person name="Dieterle M."/>
            <person name="Goretti E."/>
            <person name="Neumann K."/>
            <person name="Steinmetz A."/>
            <person name="Thomas C."/>
        </authorList>
    </citation>
    <scope>FUNCTION</scope>
    <scope>SUBCELLULAR LOCATION</scope>
    <scope>SELF-ASSOCIATION</scope>
    <scope>LIM ZINC-BINDING DOMAINS</scope>
</reference>
<reference key="11">
    <citation type="journal article" date="2016" name="Nat. Commun.">
        <title>MLP and CARP are linked to chronic PKCalpha signalling in dilated cardiomyopathy.</title>
        <authorList>
            <person name="Lange S."/>
            <person name="Gehmlich K."/>
            <person name="Lun A.S."/>
            <person name="Blondelle J."/>
            <person name="Hooper C."/>
            <person name="Dalton N.D."/>
            <person name="Alvarez E.A."/>
            <person name="Zhang X."/>
            <person name="Bang M.L."/>
            <person name="Abassi Y.A."/>
            <person name="Dos Remedios C.G."/>
            <person name="Peterson K.L."/>
            <person name="Chen J."/>
            <person name="Ehler E."/>
        </authorList>
    </citation>
    <scope>FUNCTION</scope>
    <scope>PHOSPHORYLATION</scope>
    <scope>CHARACTERIZATION OF VARIANTS CMH12 PRO-44; 54-SER-GLU-55 DELINS ARG-GLY AND GLY-58</scope>
    <scope>CHARACTERIZATION OF VARIANT ARG-72</scope>
    <scope>MUTAGENESIS OF LYS-69</scope>
</reference>
<reference key="12">
    <citation type="journal article" date="2009" name="FEBS Lett.">
        <title>Structure and dynamics of the human muscle LIM protein.</title>
        <authorList>
            <person name="Schallus T."/>
            <person name="Feher K."/>
            <person name="Ulrich A.S."/>
            <person name="Stier G."/>
            <person name="Muhle-Goll C."/>
        </authorList>
    </citation>
    <scope>STRUCTURE BY NMR OF 7-66 AND 119-176</scope>
</reference>
<reference key="13">
    <citation type="journal article" date="2002" name="Cell">
        <title>The cardiac mechanical stretch sensor machinery involves a Z disc complex that is defective in a subset of human dilated cardiomyopathy.</title>
        <authorList>
            <person name="Knoell R."/>
            <person name="Hoshijima M."/>
            <person name="Hoffman H.M."/>
            <person name="Person V."/>
            <person name="Lorenzen-Schmidt I."/>
            <person name="Bang M.-L."/>
            <person name="Hayashi T."/>
            <person name="Shiga N."/>
            <person name="Yasukawa H."/>
            <person name="Schaper W."/>
            <person name="McKenna W."/>
            <person name="Yokoyama M."/>
            <person name="Schork N.J."/>
            <person name="Omens J.H."/>
            <person name="McCulloch A.D."/>
            <person name="Kimura A."/>
            <person name="Gregorio C.C."/>
            <person name="Poller W."/>
            <person name="Schaper J."/>
            <person name="Schultheiss H.P."/>
            <person name="Chien K.R."/>
        </authorList>
    </citation>
    <scope>VARIANT CMD1M ARG-4</scope>
    <scope>INTERACTION WITH TCAP</scope>
    <scope>CHARACTERIZATION OF VARIANT CMD1M ARG-4</scope>
</reference>
<reference key="14">
    <citation type="journal article" date="2003" name="Circulation">
        <title>Mutations in the human muscle LIM protein gene in families with hypertrophic cardiomyopathy.</title>
        <authorList>
            <person name="Geier C."/>
            <person name="Perrot A."/>
            <person name="Ozcelik C."/>
            <person name="Binner P."/>
            <person name="Counsell D."/>
            <person name="Hoffmann K."/>
            <person name="Pilz B."/>
            <person name="Martiniak Y."/>
            <person name="Gehmlich K."/>
            <person name="van der Ven P.F.M."/>
            <person name="Furst D.O."/>
            <person name="Vornwald A."/>
            <person name="von Hodenberg E."/>
            <person name="Nurnberg P."/>
            <person name="Scheffold T."/>
            <person name="Dietz R."/>
            <person name="Osterziel K.J."/>
        </authorList>
    </citation>
    <scope>VARIANTS CMH12 PRO-44; 54-SER-GLU-55 DELINS ARG-GLY AND GLY-58</scope>
</reference>
<reference key="15">
    <citation type="journal article" date="2008" name="Clin. Transl. Sci.">
        <title>Coding sequence mutations identified in MYH7, TNNT2, SCN5A, CSRP3, LBD3, and TCAP from 313 patients with familial or idiopathic dilated cardiomyopathy.</title>
        <authorList>
            <person name="Hershberger R.E."/>
            <person name="Parks S.B."/>
            <person name="Kushner J.D."/>
            <person name="Li D."/>
            <person name="Ludwigsen S."/>
            <person name="Jakobs P."/>
            <person name="Nauman D."/>
            <person name="Burgess D."/>
            <person name="Partain J."/>
            <person name="Litt M."/>
        </authorList>
    </citation>
    <scope>VARIANT CMD1M ARG-72</scope>
</reference>
<reference key="16">
    <citation type="journal article" date="2008" name="Hum. Mol. Genet.">
        <title>Beyond the sarcomere: CSRP3 mutations cause hypertrophic cardiomyopathy.</title>
        <authorList>
            <person name="Geier C."/>
            <person name="Gehmlich K."/>
            <person name="Ehler E."/>
            <person name="Hassfeld S."/>
            <person name="Perrot A."/>
            <person name="Hayess K."/>
            <person name="Cardim N."/>
            <person name="Wenzel K."/>
            <person name="Erdmann B."/>
            <person name="Krackhardt F."/>
            <person name="Posch M.G."/>
            <person name="Osterziel K.J."/>
            <person name="Bublak A."/>
            <person name="Nagele H."/>
            <person name="Scheffold T."/>
            <person name="Dietz R."/>
            <person name="Chien K.R."/>
            <person name="Spuler S."/>
            <person name="Furst D.O."/>
            <person name="Nurnberg P."/>
            <person name="Ozcelik C."/>
        </authorList>
    </citation>
    <scope>CHARACTERIZATION OF VARIANT CMD1M ARG-4</scope>
    <scope>VARIANT CMH12 GLY-58</scope>
    <scope>SUBCELLULAR LOCATION</scope>
</reference>